<evidence type="ECO:0000250" key="1"/>
<evidence type="ECO:0000250" key="2">
    <source>
        <dbReference type="UniProtKB" id="P49792"/>
    </source>
</evidence>
<evidence type="ECO:0000255" key="3">
    <source>
        <dbReference type="PROSITE-ProRule" id="PRU00156"/>
    </source>
</evidence>
<evidence type="ECO:0000255" key="4">
    <source>
        <dbReference type="PROSITE-ProRule" id="PRU00164"/>
    </source>
</evidence>
<evidence type="ECO:0000255" key="5">
    <source>
        <dbReference type="PROSITE-ProRule" id="PRU00322"/>
    </source>
</evidence>
<evidence type="ECO:0000256" key="6">
    <source>
        <dbReference type="SAM" id="MobiDB-lite"/>
    </source>
</evidence>
<evidence type="ECO:0000269" key="7">
    <source>
    </source>
</evidence>
<evidence type="ECO:0000269" key="8">
    <source>
    </source>
</evidence>
<evidence type="ECO:0000269" key="9">
    <source>
    </source>
</evidence>
<evidence type="ECO:0000305" key="10"/>
<evidence type="ECO:0007744" key="11">
    <source>
    </source>
</evidence>
<evidence type="ECO:0007744" key="12">
    <source>
    </source>
</evidence>
<evidence type="ECO:0007744" key="13">
    <source>
    </source>
</evidence>
<evidence type="ECO:0007744" key="14">
    <source>
    </source>
</evidence>
<evidence type="ECO:0007744" key="15">
    <source>
    </source>
</evidence>
<evidence type="ECO:0007744" key="16">
    <source>
    </source>
</evidence>
<accession>Q9ERU9</accession>
<accession>E9QM01</accession>
<accession>Q61992</accession>
<accession>Q8C9K9</accession>
<organism>
    <name type="scientific">Mus musculus</name>
    <name type="common">Mouse</name>
    <dbReference type="NCBI Taxonomy" id="10090"/>
    <lineage>
        <taxon>Eukaryota</taxon>
        <taxon>Metazoa</taxon>
        <taxon>Chordata</taxon>
        <taxon>Craniata</taxon>
        <taxon>Vertebrata</taxon>
        <taxon>Euteleostomi</taxon>
        <taxon>Mammalia</taxon>
        <taxon>Eutheria</taxon>
        <taxon>Euarchontoglires</taxon>
        <taxon>Glires</taxon>
        <taxon>Rodentia</taxon>
        <taxon>Myomorpha</taxon>
        <taxon>Muroidea</taxon>
        <taxon>Muridae</taxon>
        <taxon>Murinae</taxon>
        <taxon>Mus</taxon>
        <taxon>Mus</taxon>
    </lineage>
</organism>
<reference key="1">
    <citation type="journal article" date="2001" name="Mamm. Genome">
        <title>Genomic organization, expression, and localization of murine Ran-binding protein 2 (RanBP2) gene.</title>
        <authorList>
            <person name="Fauser S."/>
            <person name="Aslanukov A."/>
            <person name="Roepman R."/>
            <person name="Ferreira P.A."/>
        </authorList>
    </citation>
    <scope>NUCLEOTIDE SEQUENCE [MRNA]</scope>
    <source>
        <strain>129/Ola</strain>
    </source>
</reference>
<reference key="2">
    <citation type="journal article" date="2009" name="PLoS Biol.">
        <title>Lineage-specific biology revealed by a finished genome assembly of the mouse.</title>
        <authorList>
            <person name="Church D.M."/>
            <person name="Goodstadt L."/>
            <person name="Hillier L.W."/>
            <person name="Zody M.C."/>
            <person name="Goldstein S."/>
            <person name="She X."/>
            <person name="Bult C.J."/>
            <person name="Agarwala R."/>
            <person name="Cherry J.L."/>
            <person name="DiCuccio M."/>
            <person name="Hlavina W."/>
            <person name="Kapustin Y."/>
            <person name="Meric P."/>
            <person name="Maglott D."/>
            <person name="Birtle Z."/>
            <person name="Marques A.C."/>
            <person name="Graves T."/>
            <person name="Zhou S."/>
            <person name="Teague B."/>
            <person name="Potamousis K."/>
            <person name="Churas C."/>
            <person name="Place M."/>
            <person name="Herschleb J."/>
            <person name="Runnheim R."/>
            <person name="Forrest D."/>
            <person name="Amos-Landgraf J."/>
            <person name="Schwartz D.C."/>
            <person name="Cheng Z."/>
            <person name="Lindblad-Toh K."/>
            <person name="Eichler E.E."/>
            <person name="Ponting C.P."/>
        </authorList>
    </citation>
    <scope>NUCLEOTIDE SEQUENCE [LARGE SCALE GENOMIC DNA]</scope>
    <source>
        <strain>C57BL/6J</strain>
    </source>
</reference>
<reference key="3">
    <citation type="journal article" date="2005" name="Science">
        <title>The transcriptional landscape of the mammalian genome.</title>
        <authorList>
            <person name="Carninci P."/>
            <person name="Kasukawa T."/>
            <person name="Katayama S."/>
            <person name="Gough J."/>
            <person name="Frith M.C."/>
            <person name="Maeda N."/>
            <person name="Oyama R."/>
            <person name="Ravasi T."/>
            <person name="Lenhard B."/>
            <person name="Wells C."/>
            <person name="Kodzius R."/>
            <person name="Shimokawa K."/>
            <person name="Bajic V.B."/>
            <person name="Brenner S.E."/>
            <person name="Batalov S."/>
            <person name="Forrest A.R."/>
            <person name="Zavolan M."/>
            <person name="Davis M.J."/>
            <person name="Wilming L.G."/>
            <person name="Aidinis V."/>
            <person name="Allen J.E."/>
            <person name="Ambesi-Impiombato A."/>
            <person name="Apweiler R."/>
            <person name="Aturaliya R.N."/>
            <person name="Bailey T.L."/>
            <person name="Bansal M."/>
            <person name="Baxter L."/>
            <person name="Beisel K.W."/>
            <person name="Bersano T."/>
            <person name="Bono H."/>
            <person name="Chalk A.M."/>
            <person name="Chiu K.P."/>
            <person name="Choudhary V."/>
            <person name="Christoffels A."/>
            <person name="Clutterbuck D.R."/>
            <person name="Crowe M.L."/>
            <person name="Dalla E."/>
            <person name="Dalrymple B.P."/>
            <person name="de Bono B."/>
            <person name="Della Gatta G."/>
            <person name="di Bernardo D."/>
            <person name="Down T."/>
            <person name="Engstrom P."/>
            <person name="Fagiolini M."/>
            <person name="Faulkner G."/>
            <person name="Fletcher C.F."/>
            <person name="Fukushima T."/>
            <person name="Furuno M."/>
            <person name="Futaki S."/>
            <person name="Gariboldi M."/>
            <person name="Georgii-Hemming P."/>
            <person name="Gingeras T.R."/>
            <person name="Gojobori T."/>
            <person name="Green R.E."/>
            <person name="Gustincich S."/>
            <person name="Harbers M."/>
            <person name="Hayashi Y."/>
            <person name="Hensch T.K."/>
            <person name="Hirokawa N."/>
            <person name="Hill D."/>
            <person name="Huminiecki L."/>
            <person name="Iacono M."/>
            <person name="Ikeo K."/>
            <person name="Iwama A."/>
            <person name="Ishikawa T."/>
            <person name="Jakt M."/>
            <person name="Kanapin A."/>
            <person name="Katoh M."/>
            <person name="Kawasawa Y."/>
            <person name="Kelso J."/>
            <person name="Kitamura H."/>
            <person name="Kitano H."/>
            <person name="Kollias G."/>
            <person name="Krishnan S.P."/>
            <person name="Kruger A."/>
            <person name="Kummerfeld S.K."/>
            <person name="Kurochkin I.V."/>
            <person name="Lareau L.F."/>
            <person name="Lazarevic D."/>
            <person name="Lipovich L."/>
            <person name="Liu J."/>
            <person name="Liuni S."/>
            <person name="McWilliam S."/>
            <person name="Madan Babu M."/>
            <person name="Madera M."/>
            <person name="Marchionni L."/>
            <person name="Matsuda H."/>
            <person name="Matsuzawa S."/>
            <person name="Miki H."/>
            <person name="Mignone F."/>
            <person name="Miyake S."/>
            <person name="Morris K."/>
            <person name="Mottagui-Tabar S."/>
            <person name="Mulder N."/>
            <person name="Nakano N."/>
            <person name="Nakauchi H."/>
            <person name="Ng P."/>
            <person name="Nilsson R."/>
            <person name="Nishiguchi S."/>
            <person name="Nishikawa S."/>
            <person name="Nori F."/>
            <person name="Ohara O."/>
            <person name="Okazaki Y."/>
            <person name="Orlando V."/>
            <person name="Pang K.C."/>
            <person name="Pavan W.J."/>
            <person name="Pavesi G."/>
            <person name="Pesole G."/>
            <person name="Petrovsky N."/>
            <person name="Piazza S."/>
            <person name="Reed J."/>
            <person name="Reid J.F."/>
            <person name="Ring B.Z."/>
            <person name="Ringwald M."/>
            <person name="Rost B."/>
            <person name="Ruan Y."/>
            <person name="Salzberg S.L."/>
            <person name="Sandelin A."/>
            <person name="Schneider C."/>
            <person name="Schoenbach C."/>
            <person name="Sekiguchi K."/>
            <person name="Semple C.A."/>
            <person name="Seno S."/>
            <person name="Sessa L."/>
            <person name="Sheng Y."/>
            <person name="Shibata Y."/>
            <person name="Shimada H."/>
            <person name="Shimada K."/>
            <person name="Silva D."/>
            <person name="Sinclair B."/>
            <person name="Sperling S."/>
            <person name="Stupka E."/>
            <person name="Sugiura K."/>
            <person name="Sultana R."/>
            <person name="Takenaka Y."/>
            <person name="Taki K."/>
            <person name="Tammoja K."/>
            <person name="Tan S.L."/>
            <person name="Tang S."/>
            <person name="Taylor M.S."/>
            <person name="Tegner J."/>
            <person name="Teichmann S.A."/>
            <person name="Ueda H.R."/>
            <person name="van Nimwegen E."/>
            <person name="Verardo R."/>
            <person name="Wei C.L."/>
            <person name="Yagi K."/>
            <person name="Yamanishi H."/>
            <person name="Zabarovsky E."/>
            <person name="Zhu S."/>
            <person name="Zimmer A."/>
            <person name="Hide W."/>
            <person name="Bult C."/>
            <person name="Grimmond S.M."/>
            <person name="Teasdale R.D."/>
            <person name="Liu E.T."/>
            <person name="Brusic V."/>
            <person name="Quackenbush J."/>
            <person name="Wahlestedt C."/>
            <person name="Mattick J.S."/>
            <person name="Hume D.A."/>
            <person name="Kai C."/>
            <person name="Sasaki D."/>
            <person name="Tomaru Y."/>
            <person name="Fukuda S."/>
            <person name="Kanamori-Katayama M."/>
            <person name="Suzuki M."/>
            <person name="Aoki J."/>
            <person name="Arakawa T."/>
            <person name="Iida J."/>
            <person name="Imamura K."/>
            <person name="Itoh M."/>
            <person name="Kato T."/>
            <person name="Kawaji H."/>
            <person name="Kawagashira N."/>
            <person name="Kawashima T."/>
            <person name="Kojima M."/>
            <person name="Kondo S."/>
            <person name="Konno H."/>
            <person name="Nakano K."/>
            <person name="Ninomiya N."/>
            <person name="Nishio T."/>
            <person name="Okada M."/>
            <person name="Plessy C."/>
            <person name="Shibata K."/>
            <person name="Shiraki T."/>
            <person name="Suzuki S."/>
            <person name="Tagami M."/>
            <person name="Waki K."/>
            <person name="Watahiki A."/>
            <person name="Okamura-Oho Y."/>
            <person name="Suzuki H."/>
            <person name="Kawai J."/>
            <person name="Hayashizaki Y."/>
        </authorList>
    </citation>
    <scope>NUCLEOTIDE SEQUENCE [LARGE SCALE MRNA] OF 1-222</scope>
    <source>
        <strain>C57BL/6J</strain>
        <tissue>Thymus</tissue>
    </source>
</reference>
<reference key="4">
    <citation type="journal article" date="1995" name="Eur. J. Cell Biol.">
        <title>Localization of the Ran-GTP binding protein RanBP2 at the cytoplasmic side of the nuclear pore complex.</title>
        <authorList>
            <person name="Wilken N."/>
            <person name="Senecal J.L."/>
            <person name="Scheer U."/>
            <person name="Dabauvalle M.C."/>
        </authorList>
    </citation>
    <scope>NUCLEOTIDE SEQUENCE [MRNA] OF 985-2249</scope>
</reference>
<reference key="5">
    <citation type="journal article" date="2006" name="J. Biol. Chem.">
        <title>Parkin ubiquitinates and promotes the degradation of RanBP2.</title>
        <authorList>
            <person name="Um J.W."/>
            <person name="Min D.S."/>
            <person name="Rhim H."/>
            <person name="Kim J."/>
            <person name="Paik S.R."/>
            <person name="Chung K.C."/>
        </authorList>
    </citation>
    <scope>INTERACTION WITH PRKN</scope>
</reference>
<reference key="6">
    <citation type="journal article" date="2006" name="Mol. Cell. Proteomics">
        <title>Comprehensive identification of phosphorylation sites in postsynaptic density preparations.</title>
        <authorList>
            <person name="Trinidad J.C."/>
            <person name="Specht C.G."/>
            <person name="Thalhammer A."/>
            <person name="Schoepfer R."/>
            <person name="Burlingame A.L."/>
        </authorList>
    </citation>
    <scope>IDENTIFICATION BY MASS SPECTROMETRY [LARGE SCALE ANALYSIS]</scope>
    <source>
        <tissue>Brain</tissue>
    </source>
</reference>
<reference key="7">
    <citation type="journal article" date="2007" name="Proc. Natl. Acad. Sci. U.S.A.">
        <title>Large-scale phosphorylation analysis of mouse liver.</title>
        <authorList>
            <person name="Villen J."/>
            <person name="Beausoleil S.A."/>
            <person name="Gerber S.A."/>
            <person name="Gygi S.P."/>
        </authorList>
    </citation>
    <scope>PHOSPHORYLATION [LARGE SCALE ANALYSIS] AT SER-21; SER-954; SER-2083; THR-2130; SER-2134; SER-2348; SER-2505; SER-2576; THR-2578 AND SER-2729</scope>
    <scope>IDENTIFICATION BY MASS SPECTROMETRY [LARGE SCALE ANALYSIS]</scope>
    <source>
        <tissue>Liver</tissue>
    </source>
</reference>
<reference key="8">
    <citation type="journal article" date="2009" name="Immunity">
        <title>The phagosomal proteome in interferon-gamma-activated macrophages.</title>
        <authorList>
            <person name="Trost M."/>
            <person name="English L."/>
            <person name="Lemieux S."/>
            <person name="Courcelles M."/>
            <person name="Desjardins M."/>
            <person name="Thibault P."/>
        </authorList>
    </citation>
    <scope>PHOSPHORYLATION [LARGE SCALE ANALYSIS] AT SER-954; SER-1154 AND SER-2729</scope>
    <scope>IDENTIFICATION BY MASS SPECTROMETRY [LARGE SCALE ANALYSIS]</scope>
</reference>
<reference key="9">
    <citation type="journal article" date="2009" name="Mol. Cell. Proteomics">
        <title>Large scale localization of protein phosphorylation by use of electron capture dissociation mass spectrometry.</title>
        <authorList>
            <person name="Sweet S.M."/>
            <person name="Bailey C.M."/>
            <person name="Cunningham D.L."/>
            <person name="Heath J.K."/>
            <person name="Cooper H.J."/>
        </authorList>
    </citation>
    <scope>PHOSPHORYLATION [LARGE SCALE ANALYSIS] AT SER-781; SER-788 AND SER-2505</scope>
    <scope>IDENTIFICATION BY MASS SPECTROMETRY [LARGE SCALE ANALYSIS]</scope>
    <source>
        <tissue>Embryonic fibroblast</tissue>
    </source>
</reference>
<reference key="10">
    <citation type="journal article" date="2010" name="Cell">
        <title>A tissue-specific atlas of mouse protein phosphorylation and expression.</title>
        <authorList>
            <person name="Huttlin E.L."/>
            <person name="Jedrychowski M.P."/>
            <person name="Elias J.E."/>
            <person name="Goswami T."/>
            <person name="Rad R."/>
            <person name="Beausoleil S.A."/>
            <person name="Villen J."/>
            <person name="Haas W."/>
            <person name="Sowa M.E."/>
            <person name="Gygi S.P."/>
        </authorList>
    </citation>
    <scope>PHOSPHORYLATION [LARGE SCALE ANALYSIS] AT SER-21; SER-781; SER-788; SER-954; SER-1101; SER-1154; THR-1842; SER-1845; THR-1990; SER-2083; SER-2088; SER-2107; SER-2117; SER-2127; THR-2130; SER-2134; SER-2299; SER-2330; SER-2505; SER-2576; THR-2578 AND SER-2729</scope>
    <scope>IDENTIFICATION BY MASS SPECTROMETRY [LARGE SCALE ANALYSIS]</scope>
    <source>
        <tissue>Brain</tissue>
        <tissue>Brown adipose tissue</tissue>
        <tissue>Heart</tissue>
        <tissue>Kidney</tissue>
        <tissue>Liver</tissue>
        <tissue>Lung</tissue>
        <tissue>Pancreas</tissue>
        <tissue>Spleen</tissue>
        <tissue>Testis</tissue>
    </source>
</reference>
<reference key="11">
    <citation type="journal article" date="2013" name="J. Cell Sci.">
        <title>Intermolecular disulfide bonds between nucleoporins regulate karyopherin-dependent nuclear transport.</title>
        <authorList>
            <person name="Yoshimura S.H."/>
            <person name="Otsuka S."/>
            <person name="Kumeta M."/>
            <person name="Taga M."/>
            <person name="Takeyasu K."/>
        </authorList>
    </citation>
    <scope>DISULFIDE BOND</scope>
</reference>
<reference key="12">
    <citation type="journal article" date="2013" name="Mol. Cell">
        <title>SIRT5-mediated lysine desuccinylation impacts diverse metabolic pathways.</title>
        <authorList>
            <person name="Park J."/>
            <person name="Chen Y."/>
            <person name="Tishkoff D.X."/>
            <person name="Peng C."/>
            <person name="Tan M."/>
            <person name="Dai L."/>
            <person name="Xie Z."/>
            <person name="Zhang Y."/>
            <person name="Zwaans B.M."/>
            <person name="Skinner M.E."/>
            <person name="Lombard D.B."/>
            <person name="Zhao Y."/>
        </authorList>
    </citation>
    <scope>ACETYLATION [LARGE SCALE ANALYSIS] AT LYS-1814</scope>
    <scope>IDENTIFICATION BY MASS SPECTROMETRY [LARGE SCALE ANALYSIS]</scope>
    <source>
        <tissue>Embryonic fibroblast</tissue>
    </source>
</reference>
<reference key="13">
    <citation type="journal article" date="2014" name="Mol. Cell. Proteomics">
        <title>Immunoaffinity enrichment and mass spectrometry analysis of protein methylation.</title>
        <authorList>
            <person name="Guo A."/>
            <person name="Gu H."/>
            <person name="Zhou J."/>
            <person name="Mulhern D."/>
            <person name="Wang Y."/>
            <person name="Lee K.A."/>
            <person name="Yang V."/>
            <person name="Aguiar M."/>
            <person name="Kornhauser J."/>
            <person name="Jia X."/>
            <person name="Ren J."/>
            <person name="Beausoleil S.A."/>
            <person name="Silva J.C."/>
            <person name="Vemulapalli V."/>
            <person name="Bedford M.T."/>
            <person name="Comb M.J."/>
        </authorList>
    </citation>
    <scope>METHYLATION [LARGE SCALE ANALYSIS] AT ARG-1015</scope>
    <scope>IDENTIFICATION BY MASS SPECTROMETRY [LARGE SCALE ANALYSIS]</scope>
    <source>
        <tissue>Brain</tissue>
        <tissue>Embryo</tissue>
    </source>
</reference>
<reference key="14">
    <citation type="journal article" date="2022" name="PLoS ONE">
        <title>An Rtn4/Nogo-A-interacting micropeptide modulates synaptic plasticity with age.</title>
        <authorList>
            <person name="Kragness S."/>
            <person name="Clark Z."/>
            <person name="Mullin A."/>
            <person name="Guidry J."/>
            <person name="Earls L.R."/>
        </authorList>
    </citation>
    <scope>INTERACTION WITH PANTS</scope>
</reference>
<proteinExistence type="evidence at protein level"/>
<name>RBP2_MOUSE</name>
<feature type="chain" id="PRO_0000204914" description="E3 SUMO-protein ligase RanBP2">
    <location>
        <begin position="1"/>
        <end position="3053"/>
    </location>
</feature>
<feature type="repeat" description="TPR 1">
    <location>
        <begin position="26"/>
        <end position="59"/>
    </location>
</feature>
<feature type="repeat" description="TPR 2">
    <location>
        <begin position="60"/>
        <end position="93"/>
    </location>
</feature>
<feature type="repeat" description="TPR 3">
    <location>
        <begin position="94"/>
        <end position="128"/>
    </location>
</feature>
<feature type="repeat" description="TPR 4">
    <location>
        <begin position="165"/>
        <end position="201"/>
    </location>
</feature>
<feature type="repeat" description="TPR 5">
    <location>
        <begin position="288"/>
        <end position="319"/>
    </location>
</feature>
<feature type="repeat" description="TPR 6">
    <location>
        <begin position="583"/>
        <end position="616"/>
    </location>
</feature>
<feature type="repeat" description="TPR 7">
    <location>
        <begin position="648"/>
        <end position="681"/>
    </location>
</feature>
<feature type="repeat" description="1" evidence="2">
    <location>
        <begin position="1000"/>
        <end position="1001"/>
    </location>
</feature>
<feature type="repeat" description="2" evidence="2">
    <location>
        <begin position="1099"/>
        <end position="1100"/>
    </location>
</feature>
<feature type="repeat" description="3" evidence="10">
    <location>
        <begin position="1117"/>
        <end position="1118"/>
    </location>
</feature>
<feature type="domain" description="RanBD1 1" evidence="4">
    <location>
        <begin position="1165"/>
        <end position="1301"/>
    </location>
</feature>
<feature type="repeat" description="4" evidence="2">
    <location>
        <begin position="1449"/>
        <end position="1450"/>
    </location>
</feature>
<feature type="repeat" description="5" evidence="2">
    <location>
        <begin position="1538"/>
        <end position="1539"/>
    </location>
</feature>
<feature type="repeat" description="6" evidence="2">
    <location>
        <begin position="1696"/>
        <end position="1697"/>
    </location>
</feature>
<feature type="repeat" description="7" evidence="2">
    <location>
        <begin position="1737"/>
        <end position="1738"/>
    </location>
</feature>
<feature type="repeat" description="8" evidence="2">
    <location>
        <begin position="1775"/>
        <end position="1776"/>
    </location>
</feature>
<feature type="repeat" description="9" evidence="2">
    <location>
        <begin position="1798"/>
        <end position="1799"/>
    </location>
</feature>
<feature type="domain" description="RanBD1 2" evidence="4">
    <location>
        <begin position="1849"/>
        <end position="1985"/>
    </location>
</feature>
<feature type="repeat" description="10" evidence="2">
    <location>
        <begin position="2097"/>
        <end position="2098"/>
    </location>
</feature>
<feature type="domain" description="RanBD1 3" evidence="4">
    <location>
        <begin position="2146"/>
        <end position="2282"/>
    </location>
</feature>
<feature type="repeat" description="11" evidence="2">
    <location>
        <begin position="2354"/>
        <end position="2355"/>
    </location>
</feature>
<feature type="repeat" description="12" evidence="2">
    <location>
        <begin position="2373"/>
        <end position="2374"/>
    </location>
</feature>
<feature type="repeat" description="13" evidence="2">
    <location>
        <begin position="2383"/>
        <end position="2384"/>
    </location>
</feature>
<feature type="repeat" description="1">
    <location>
        <begin position="2470"/>
        <end position="2522"/>
    </location>
</feature>
<feature type="repeat" description="2">
    <location>
        <begin position="2546"/>
        <end position="2596"/>
    </location>
</feature>
<feature type="repeat" description="14" evidence="2">
    <location>
        <begin position="2674"/>
        <end position="2675"/>
    </location>
</feature>
<feature type="repeat" description="15" evidence="2">
    <location>
        <begin position="2676"/>
        <end position="2677"/>
    </location>
</feature>
<feature type="repeat" description="16" evidence="2">
    <location>
        <begin position="2697"/>
        <end position="2698"/>
    </location>
</feature>
<feature type="repeat" description="17" evidence="10">
    <location>
        <begin position="2714"/>
        <end position="2715"/>
    </location>
</feature>
<feature type="domain" description="RanBD1 4" evidence="4">
    <location>
        <begin position="2740"/>
        <end position="2875"/>
    </location>
</feature>
<feature type="domain" description="PPIase cyclophilin-type" evidence="3">
    <location>
        <begin position="2896"/>
        <end position="3052"/>
    </location>
</feature>
<feature type="repeat" description="18" evidence="2">
    <location>
        <begin position="2935"/>
        <end position="2936"/>
    </location>
</feature>
<feature type="repeat" description="19" evidence="2">
    <location>
        <begin position="3018"/>
        <end position="3019"/>
    </location>
</feature>
<feature type="repeat" description="20" evidence="2">
    <location>
        <begin position="3034"/>
        <end position="3035"/>
    </location>
</feature>
<feature type="zinc finger region" description="RanBP2-type 1" evidence="5">
    <location>
        <begin position="1345"/>
        <end position="1375"/>
    </location>
</feature>
<feature type="zinc finger region" description="RanBP2-type 2" evidence="5">
    <location>
        <begin position="1410"/>
        <end position="1439"/>
    </location>
</feature>
<feature type="zinc finger region" description="RanBP2-type 3" evidence="5">
    <location>
        <begin position="1469"/>
        <end position="1498"/>
    </location>
</feature>
<feature type="zinc finger region" description="RanBP2-type 4" evidence="5">
    <location>
        <begin position="1494"/>
        <end position="1527"/>
    </location>
</feature>
<feature type="zinc finger region" description="RanBP2-type 5" evidence="5">
    <location>
        <begin position="1558"/>
        <end position="1587"/>
    </location>
</feature>
<feature type="zinc finger region" description="RanBP2-type 6" evidence="5">
    <location>
        <begin position="1617"/>
        <end position="1646"/>
    </location>
</feature>
<feature type="region of interest" description="Disordered" evidence="6">
    <location>
        <begin position="773"/>
        <end position="802"/>
    </location>
</feature>
<feature type="region of interest" description="20 X 2 AA repeats of F-G" evidence="10">
    <location>
        <begin position="1000"/>
        <end position="3035"/>
    </location>
</feature>
<feature type="region of interest" description="Disordered" evidence="6">
    <location>
        <begin position="1147"/>
        <end position="1171"/>
    </location>
</feature>
<feature type="region of interest" description="Disordered" evidence="6">
    <location>
        <begin position="1587"/>
        <end position="1609"/>
    </location>
</feature>
<feature type="region of interest" description="Disordered" evidence="6">
    <location>
        <begin position="1648"/>
        <end position="1675"/>
    </location>
</feature>
<feature type="region of interest" description="Disordered" evidence="6">
    <location>
        <begin position="1744"/>
        <end position="1772"/>
    </location>
</feature>
<feature type="region of interest" description="Disordered" evidence="6">
    <location>
        <begin position="1819"/>
        <end position="1846"/>
    </location>
</feature>
<feature type="region of interest" description="Interaction with BICD2" evidence="2">
    <location>
        <begin position="1984"/>
        <end position="2124"/>
    </location>
</feature>
<feature type="region of interest" description="Disordered" evidence="6">
    <location>
        <begin position="2030"/>
        <end position="2060"/>
    </location>
</feature>
<feature type="region of interest" description="Disordered" evidence="6">
    <location>
        <begin position="2111"/>
        <end position="2144"/>
    </location>
</feature>
<feature type="region of interest" description="Disordered" evidence="6">
    <location>
        <begin position="2316"/>
        <end position="2348"/>
    </location>
</feature>
<feature type="region of interest" description="Disordered" evidence="6">
    <location>
        <begin position="2394"/>
        <end position="2430"/>
    </location>
</feature>
<feature type="region of interest" description="Disordered" evidence="6">
    <location>
        <begin position="2443"/>
        <end position="2463"/>
    </location>
</feature>
<feature type="region of interest" description="Interaction with sumoylated RANGAP1" evidence="1">
    <location>
        <begin position="2468"/>
        <end position="2472"/>
    </location>
</feature>
<feature type="region of interest" description="2 X 50 AA approximate repeats">
    <location>
        <begin position="2470"/>
        <end position="2596"/>
    </location>
</feature>
<feature type="region of interest" description="Required for E3 SUMO-ligase activity" evidence="1">
    <location>
        <begin position="2470"/>
        <end position="2545"/>
    </location>
</feature>
<feature type="region of interest" description="Interaction with UBE2I" evidence="1">
    <location>
        <begin position="2470"/>
        <end position="2522"/>
    </location>
</feature>
<feature type="region of interest" description="Interaction with SUMO1" evidence="1">
    <location>
        <begin position="2523"/>
        <end position="2596"/>
    </location>
</feature>
<feature type="region of interest" description="Disordered" evidence="6">
    <location>
        <begin position="2598"/>
        <end position="2666"/>
    </location>
</feature>
<feature type="compositionally biased region" description="Low complexity" evidence="6">
    <location>
        <begin position="778"/>
        <end position="797"/>
    </location>
</feature>
<feature type="compositionally biased region" description="Polar residues" evidence="6">
    <location>
        <begin position="1587"/>
        <end position="1606"/>
    </location>
</feature>
<feature type="compositionally biased region" description="Polar residues" evidence="6">
    <location>
        <begin position="1657"/>
        <end position="1675"/>
    </location>
</feature>
<feature type="compositionally biased region" description="Basic and acidic residues" evidence="6">
    <location>
        <begin position="1744"/>
        <end position="1755"/>
    </location>
</feature>
<feature type="compositionally biased region" description="Polar residues" evidence="6">
    <location>
        <begin position="1757"/>
        <end position="1772"/>
    </location>
</feature>
<feature type="compositionally biased region" description="Polar residues" evidence="6">
    <location>
        <begin position="1819"/>
        <end position="1831"/>
    </location>
</feature>
<feature type="compositionally biased region" description="Low complexity" evidence="6">
    <location>
        <begin position="2034"/>
        <end position="2048"/>
    </location>
</feature>
<feature type="compositionally biased region" description="Low complexity" evidence="6">
    <location>
        <begin position="2111"/>
        <end position="2121"/>
    </location>
</feature>
<feature type="compositionally biased region" description="Acidic residues" evidence="6">
    <location>
        <begin position="2130"/>
        <end position="2142"/>
    </location>
</feature>
<feature type="compositionally biased region" description="Low complexity" evidence="6">
    <location>
        <begin position="2328"/>
        <end position="2342"/>
    </location>
</feature>
<feature type="compositionally biased region" description="Polar residues" evidence="6">
    <location>
        <begin position="2394"/>
        <end position="2406"/>
    </location>
</feature>
<feature type="compositionally biased region" description="Basic and acidic residues" evidence="6">
    <location>
        <begin position="2450"/>
        <end position="2462"/>
    </location>
</feature>
<feature type="compositionally biased region" description="Basic and acidic residues" evidence="6">
    <location>
        <begin position="2598"/>
        <end position="2617"/>
    </location>
</feature>
<feature type="compositionally biased region" description="Basic and acidic residues" evidence="6">
    <location>
        <begin position="2627"/>
        <end position="2637"/>
    </location>
</feature>
<feature type="compositionally biased region" description="Basic and acidic residues" evidence="6">
    <location>
        <begin position="2649"/>
        <end position="2666"/>
    </location>
</feature>
<feature type="modified residue" description="Phosphoserine" evidence="11 14">
    <location>
        <position position="21"/>
    </location>
</feature>
<feature type="modified residue" description="Phosphothreonine" evidence="2">
    <location>
        <position position="779"/>
    </location>
</feature>
<feature type="modified residue" description="Phosphoserine" evidence="12 14">
    <location>
        <position position="781"/>
    </location>
</feature>
<feature type="modified residue" description="Phosphoserine" evidence="12 14">
    <location>
        <position position="788"/>
    </location>
</feature>
<feature type="modified residue" description="Phosphoserine" evidence="2">
    <location>
        <position position="837"/>
    </location>
</feature>
<feature type="modified residue" description="Asymmetric dimethylarginine" evidence="2">
    <location>
        <position position="944"/>
    </location>
</feature>
<feature type="modified residue" description="Phosphoserine" evidence="2">
    <location>
        <position position="947"/>
    </location>
</feature>
<feature type="modified residue" description="Phosphoserine" evidence="11 13 14">
    <location>
        <position position="954"/>
    </location>
</feature>
<feature type="modified residue" description="Asymmetric dimethylarginine; alternate" evidence="16">
    <location>
        <position position="1015"/>
    </location>
</feature>
<feature type="modified residue" description="Omega-N-methylarginine; alternate" evidence="2">
    <location>
        <position position="1015"/>
    </location>
</feature>
<feature type="modified residue" description="Phosphothreonine" evidence="2">
    <location>
        <position position="1096"/>
    </location>
</feature>
<feature type="modified residue" description="Phosphoserine" evidence="14">
    <location>
        <position position="1101"/>
    </location>
</feature>
<feature type="modified residue" description="Phosphothreonine" evidence="2">
    <location>
        <position position="1138"/>
    </location>
</feature>
<feature type="modified residue" description="Phosphoserine" evidence="13 14">
    <location>
        <position position="1154"/>
    </location>
</feature>
<feature type="modified residue" description="Phosphoserine" evidence="2">
    <location>
        <position position="1243"/>
    </location>
</feature>
<feature type="modified residue" description="Phosphothreonine" evidence="2">
    <location>
        <position position="1407"/>
    </location>
</feature>
<feature type="modified residue" description="Phosphoserine" evidence="2">
    <location>
        <position position="1438"/>
    </location>
</feature>
<feature type="modified residue" description="Phosphoserine" evidence="2">
    <location>
        <position position="1441"/>
    </location>
</feature>
<feature type="modified residue" description="Phosphoserine" evidence="2">
    <location>
        <position position="1446"/>
    </location>
</feature>
<feature type="modified residue" description="Phosphoserine" evidence="2">
    <location>
        <position position="1528"/>
    </location>
</feature>
<feature type="modified residue" description="Phosphoserine" evidence="2">
    <location>
        <position position="1670"/>
    </location>
</feature>
<feature type="modified residue" description="Phosphoserine" evidence="2">
    <location>
        <position position="1706"/>
    </location>
</feature>
<feature type="modified residue" description="N6-acetyllysine" evidence="15">
    <location>
        <position position="1814"/>
    </location>
</feature>
<feature type="modified residue" description="Phosphothreonine" evidence="14">
    <location>
        <position position="1842"/>
    </location>
</feature>
<feature type="modified residue" description="Phosphoserine" evidence="14">
    <location>
        <position position="1845"/>
    </location>
</feature>
<feature type="modified residue" description="Phosphothreonine" evidence="14">
    <location>
        <position position="1990"/>
    </location>
</feature>
<feature type="modified residue" description="Phosphoserine" evidence="11 14">
    <location>
        <position position="2083"/>
    </location>
</feature>
<feature type="modified residue" description="Phosphoserine" evidence="14">
    <location>
        <position position="2088"/>
    </location>
</feature>
<feature type="modified residue" description="Phosphoserine" evidence="14">
    <location>
        <position position="2107"/>
    </location>
</feature>
<feature type="modified residue" description="Phosphoserine" evidence="14">
    <location>
        <position position="2117"/>
    </location>
</feature>
<feature type="modified residue" description="Phosphoserine" evidence="14">
    <location>
        <position position="2127"/>
    </location>
</feature>
<feature type="modified residue" description="Phosphothreonine" evidence="11 14">
    <location>
        <position position="2130"/>
    </location>
</feature>
<feature type="modified residue" description="Phosphoserine" evidence="11 14">
    <location>
        <position position="2134"/>
    </location>
</feature>
<feature type="modified residue" description="Phosphoserine" evidence="14">
    <location>
        <position position="2299"/>
    </location>
</feature>
<feature type="modified residue" description="Phosphoserine" evidence="14">
    <location>
        <position position="2330"/>
    </location>
</feature>
<feature type="modified residue" description="Phosphoserine" evidence="11">
    <location>
        <position position="2348"/>
    </location>
</feature>
<feature type="modified residue" description="Phosphoserine" evidence="2">
    <location>
        <position position="2364"/>
    </location>
</feature>
<feature type="modified residue" description="Phosphothreonine" evidence="2">
    <location>
        <position position="2450"/>
    </location>
</feature>
<feature type="modified residue" description="Phosphotyrosine" evidence="2">
    <location>
        <position position="2503"/>
    </location>
</feature>
<feature type="modified residue" description="Phosphoserine" evidence="11 12 14">
    <location>
        <position position="2505"/>
    </location>
</feature>
<feature type="modified residue" description="Phosphoserine" evidence="11 14">
    <location>
        <position position="2576"/>
    </location>
</feature>
<feature type="modified residue" description="Phosphothreonine" evidence="11 14">
    <location>
        <position position="2578"/>
    </location>
</feature>
<feature type="modified residue" description="Phosphoserine" evidence="2">
    <location>
        <position position="2640"/>
    </location>
</feature>
<feature type="modified residue" description="Phosphoserine" evidence="11 13 14">
    <location>
        <position position="2729"/>
    </location>
</feature>
<feature type="modified residue" description="Phosphoserine" evidence="2">
    <location>
        <position position="3036"/>
    </location>
</feature>
<feature type="cross-link" description="Glycyl lysine isopeptide (Lys-Gly) (interchain with G-Cter in SUMO2)" evidence="2">
    <location>
        <position position="1344"/>
    </location>
</feature>
<feature type="cross-link" description="Glycyl lysine isopeptide (Lys-Gly) (interchain with G-Cter in SUMO1); alternate" evidence="2">
    <location>
        <position position="1557"/>
    </location>
</feature>
<feature type="cross-link" description="Glycyl lysine isopeptide (Lys-Gly) (interchain with G-Cter in SUMO2); alternate" evidence="2">
    <location>
        <position position="1557"/>
    </location>
</feature>
<feature type="cross-link" description="Glycyl lysine isopeptide (Lys-Gly) (interchain with G-Cter in SUMO2)" evidence="2">
    <location>
        <position position="1607"/>
    </location>
</feature>
<feature type="cross-link" description="Glycyl lysine isopeptide (Lys-Gly) (interchain with G-Cter in SUMO1); alternate" evidence="2">
    <location>
        <position position="1616"/>
    </location>
</feature>
<feature type="cross-link" description="Glycyl lysine isopeptide (Lys-Gly) (interchain with G-Cter in SUMO2); alternate" evidence="2">
    <location>
        <position position="1616"/>
    </location>
</feature>
<feature type="cross-link" description="Glycyl lysine isopeptide (Lys-Gly) (interchain with G-Cter in SUMO2)" evidence="2">
    <location>
        <position position="1859"/>
    </location>
</feature>
<feature type="cross-link" description="Glycyl lysine isopeptide (Lys-Gly) (interchain with G-Cter in SUMO2)" evidence="2">
    <location>
        <position position="2360"/>
    </location>
</feature>
<feature type="cross-link" description="Glycyl lysine isopeptide (Lys-Gly) (interchain with G-Cter in SUMO)" evidence="1">
    <location>
        <position position="2430"/>
    </location>
</feature>
<feature type="cross-link" description="Glycyl lysine isopeptide (Lys-Gly) (interchain with G-Cter in SUMO1); alternate" evidence="2">
    <location>
        <position position="2432"/>
    </location>
</feature>
<feature type="cross-link" description="Glycyl lysine isopeptide (Lys-Gly) (interchain with G-Cter in SUMO2); alternate" evidence="2">
    <location>
        <position position="2432"/>
    </location>
</feature>
<feature type="cross-link" description="Glycyl lysine isopeptide (Lys-Gly) (interchain with G-Cter in SUMO2)" evidence="2">
    <location>
        <position position="2449"/>
    </location>
</feature>
<feature type="cross-link" description="Glycyl lysine isopeptide (Lys-Gly) (interchain with G-Cter in SUMO2)" evidence="2">
    <location>
        <position position="2627"/>
    </location>
</feature>
<feature type="cross-link" description="Glycyl lysine isopeptide (Lys-Gly) (interchain with G-Cter in SUMO2)" evidence="2">
    <location>
        <position position="2649"/>
    </location>
</feature>
<feature type="sequence conflict" description="In Ref. 3; BAC31101." evidence="10" ref="3">
    <original>EYLESLQCLD</original>
    <variation>VGETYFSTVF</variation>
    <location>
        <begin position="213"/>
        <end position="222"/>
    </location>
</feature>
<feature type="sequence conflict" description="In Ref. 4; CAA60778." evidence="10" ref="4">
    <original>LVAHASRSAESKVIEFG</original>
    <variation>IPGSRFKVSRIKGYRIWL</variation>
    <location>
        <begin position="985"/>
        <end position="1001"/>
    </location>
</feature>
<feature type="sequence conflict" description="In Ref. 4; CAA60778." evidence="10" ref="4">
    <original>ISGQ</original>
    <variation>YLA</variation>
    <location>
        <begin position="1086"/>
        <end position="1089"/>
    </location>
</feature>
<feature type="sequence conflict" description="In Ref. 4; CAA60778." evidence="10" ref="4">
    <original>L</original>
    <variation>F</variation>
    <location>
        <position position="1269"/>
    </location>
</feature>
<feature type="sequence conflict" description="In Ref. 4; CAA60778." evidence="10" ref="4">
    <original>E</original>
    <variation>G</variation>
    <location>
        <position position="1273"/>
    </location>
</feature>
<feature type="sequence conflict" description="In Ref. 4; CAA60778." evidence="10" ref="4">
    <original>A</original>
    <variation>S</variation>
    <location>
        <position position="1276"/>
    </location>
</feature>
<feature type="sequence conflict" description="In Ref. 4; CAA60778." evidence="10" ref="4">
    <original>K</original>
    <variation>Q</variation>
    <location>
        <position position="1280"/>
    </location>
</feature>
<feature type="sequence conflict" description="In Ref. 4; CAA60778." evidence="10" ref="4">
    <original>E</original>
    <variation>G</variation>
    <location>
        <position position="1293"/>
    </location>
</feature>
<feature type="sequence conflict" description="In Ref. 4; CAA60778." evidence="10" ref="4">
    <original>N</original>
    <variation>D</variation>
    <location>
        <position position="1297"/>
    </location>
</feature>
<feature type="sequence conflict" description="In Ref. 4; CAA60778." evidence="10" ref="4">
    <original>E</original>
    <variation>D</variation>
    <location>
        <position position="1861"/>
    </location>
</feature>
<feature type="sequence conflict" description="In Ref. 1; AAG17403." evidence="10" ref="1">
    <original>EC</original>
    <variation>DS</variation>
    <location>
        <begin position="2868"/>
        <end position="2869"/>
    </location>
</feature>
<gene>
    <name type="primary">Ranbp2</name>
</gene>
<comment type="function">
    <text evidence="2">E3 SUMO-protein ligase which facilitates SUMO1 and SUMO2 conjugation by UBE2I. Involved in transport factor (Ran-GTP, karyopherin)-mediated protein import via the F-G repeat-containing domain which acts as a docking site for substrates. Binds single-stranded RNA (in vitro). May bind DNA. Component of the nuclear export pathway. Specific docking site for the nuclear export factor exportin-1. Inhibits EIF4E-dependent mRNA export. Sumoylates PML at 'Lys-490' which is essential for the proper assembly of PML-NB. Recruits BICD2 to the nuclear envelope and cytoplasmic stacks of nuclear pore complex known as annulate lamellae during G2 phase of cell cycle. Probable inactive PPIase with no peptidyl-prolyl cis-trans isomerase activity.</text>
</comment>
<comment type="pathway">
    <text>Protein modification; protein sumoylation.</text>
</comment>
<comment type="subunit">
    <text evidence="2 7 9">Part of the nuclear pore complex (By similarity). Forms a complex with NXT1, NXF1 and RANGAP1 (By similarity). Forms a tight complex with RANBP1 and UBE2I (By similarity). Interacts with SUMO1 but not SUMO2 (By similarity). Interacts with sumoylated RANGAP1 (By similarity). Interacts with CDCA8 (By similarity). Interacts with PML (By similarity). Interacts with BICD2 (By similarity). Interacts with PRKN (PubMed:16332688). Interacts with MCM3AP (By similarity). Interacts with COX11 (By similarity). Interacts with synaptic plasticity regulator PANTS (PubMed:35771867).</text>
</comment>
<comment type="interaction">
    <interactant intactId="EBI-643756">
        <id>Q9ERU9</id>
    </interactant>
    <interactant intactId="EBI-973635">
        <id>Q9WVS6</id>
        <label>Prkn</label>
    </interactant>
    <organismsDiffer>false</organismsDiffer>
    <experiments>2</experiments>
</comment>
<comment type="subcellular location">
    <subcellularLocation>
        <location evidence="2">Nucleus</location>
    </subcellularLocation>
    <subcellularLocation>
        <location evidence="2">Nucleus membrane</location>
    </subcellularLocation>
    <subcellularLocation>
        <location evidence="2">Nucleus</location>
        <location evidence="2">Nuclear pore complex</location>
    </subcellularLocation>
    <subcellularLocation>
        <location evidence="2">Nucleus envelope</location>
    </subcellularLocation>
    <text evidence="2">Detected in diffuse and discrete intranuclear foci. Cytoplasmic filaments.</text>
</comment>
<comment type="domain">
    <text evidence="10">Contains FG repeats. FG repeats are interaction sites for karyopherins (importins, exportins) and form probably an affinity gradient, guiding the transport proteins unidirectionally with their cargo through the NPC. FG repeat regions are highly flexible and lack ordered secondary structure. The overall conservation of FG repeats regarding exact sequence, spacing, and repeat unit length is limited.</text>
</comment>
<comment type="domain">
    <text evidence="2">The PPIase cyclophilin-type domain has high structural similarity with PPIA, but has extremely low and barely detectable proline isomerase activity (in vitro) (By similarity). Only about half of the residues that surround the PPIA active site cleft are conserved.</text>
</comment>
<comment type="PTM">
    <text evidence="2">Polyubiquitinated by PRKN, which leads to proteasomal degradation.</text>
</comment>
<comment type="PTM">
    <text evidence="8">The inner channel of the NPC has a different redox environment from the cytoplasm and allows the formation of interchain disulfide bonds between some nucleoporins, the significant increase of these linkages upon oxidative stress reduces the permeability of the NPC.</text>
</comment>
<comment type="similarity">
    <text evidence="10">Belongs to the RanBP2 E3 ligase family.</text>
</comment>
<comment type="caution">
    <text evidence="2">Despite the presence of a PPIase cyclophilin-type domain, it has probably no peptidyl-prolyl cis-trans isomerase activity.</text>
</comment>
<protein>
    <recommendedName>
        <fullName>E3 SUMO-protein ligase RanBP2</fullName>
        <ecNumber evidence="2">2.3.2.-</ecNumber>
    </recommendedName>
    <alternativeName>
        <fullName>Ran-binding protein 2</fullName>
        <shortName>RanBP2</shortName>
    </alternativeName>
</protein>
<sequence>MRRSKADVERYIASVQGSAPSPREKSMKGFYFAKLYYEAKEYDLAKKYISTYINVQERDPKAHRFLGLLYEVEENIDKAVECYKRSVELNPTQKDLVLKIAELLCKNDVTDGRAKYWVERAAKLFPGSPAIYKLKEQLLDCKGEDGWNKLFDLIQSELYARPDDIHVNIRLVELYRSNKRLKDAVAHCHEADRNTALRSSLEWNLCVVQTLKEYLESLQCLDSDKSTWRATNKDLLLAYANLMLLTLSTRDVQEGRELLESFDSALQSVKSSVGGNDELSATFLETKGHFYMHVGSLLLKMGQQSDIQWRALSELAALCYLVAFQVPRPKVKLIKGEAGQNLLETMAHDRLSQSGHMLLNLSRGKQDFLKEVVESFANKSGQSALCDALFSSQSSKERSFLGNDDIGNLDGQVPDPDDLARYDTGAVRAHNGSLQHLTWLGLQWNSLSTLPAIRKWLKQLFHHLPQETSRLETNAPESICILDLEVFLLGVIYTSHLQLKEKCNSHHTSYQPLCLPLPVCRQLCTERQKTWWDAVCTLIHRKALPGTSAKLRLLVQREINSLRGQEKHGLQPALLVHWAQSLQKTGSSLNSFYDQREYIGRSVHYWRKVLPLLKMIRKKNSIPEPIDPLFKHFHSVDIQASEIGEYEEDAHITFAILDAVNGNIEDAMTAFESIKNVVSYWNLALIFHRKAEDIENDALSPEEQEECKNYLRKTRDYLIRILDDSDSNTSVVQKLPVPLESVKEMLNSVMQELEDYSEGGTLYKNGCWRSADSELKHSTPSPTKYSLSPSKSYKYSPKTPPRWAEDQNSLLKMICQQVEAIKKEMQELKLNSNNSASPHRWPAEPYGQDPAPDGYQGSQTFHGAPLTVATTGPSVYYSQSPAYNSQYLLRPAANVTPTKGPVYGMNRLPPQQHIYAYSQQMHTPPVQSSSACMFSQEMYGPPLRFESPATGILSPRGDDYFNYNVQQTSTNPPLPEPGYFTKPPLVAHASRSAESKVIEFGKSNFVQPMQGEVIRPPLTTPAHTTQPTPFKFNSNFKSNDGDFTFSSPQVVAQPPSTAYSNSESLLGLLTSDKPLQGDGYSGLKPISGQASGSRNTFSFGSKNTLTENMGPNQQKNFGFHRSDDMFAFHGPGKSVFTTAASELANKSHETDGGSAHGDEEDDGPHFEPVVPLPDKIEVKTGEEDEEEFFCNRAKLFRFDGESKEWKERGIGNVKILRHKTSGKIRLLMRREQVLKICANHYISPDMKLTPNAGSDRSFVWHALDYADELPKPEQLAIRFKTPEEAALFKCKFEEAQNILKALGTNTSTAPNHTLRIVKESATQDNKDICKADGGNLNFEFQIVKKEGPYWNCNSCSFKNAATAKKCVSCQNTNPTSNKELLGPPLVENGFAPKTGLENAQDRFATMTANKEGHWDCSVCLVRNEPTVSRCIACQNTKSASSFVQTSFKFGQGDLPKSVDSDFRSVFSKKEGQWECSVCLVRNERSAKKCVACENPGKQFKEWHCSLCSVKNEAHAIKCVACNNPVTPSLSTAPPSFKFGTSEMSKPFRIGFEGMFAKKEGQWDCSLCFVRNEASATHCIACQYPNKQNQPTSCVSAPASSETSRSPKSGFEGLFPKKEGEWECAVCSVQNESSSLKCVACEASKPTHKPHEAPSAFTVGSKSQSNESAGSQVGTEFKSNFPEKNFKVGISEQKFKFGHVDQEKTPSFAFQGGSNTEFKSIKDGFSFCIPVSADGFKFGIQEKGNQEKKSEKHLENDPSFQAHDTSGQKNGSGVVFGQTSSTFTFADLAKSTSREGFQFGKKDPNFKGFSGAGEKLFSSQSGKVAEKANTSSDLEKDDDAYKTEDSDDIHFEPVVQMPEKVELVTGEEDEKVLYSQRVKLFRFDAEISQWKERGLGNLKILKNEVNGKLRMLMRREQVLKVCANHWITTTMNLKPLSGSDRAWMWLASDFSDGDAKLEQLAAKFKTPELAEEFKQKFEECQRLLLDIPLQTPHKLVDTGRAAKLIQRAEEMKSGLKDFKTFLTNDQVKVTDEENASSGADAPSASDTTAKQNPDNTGPALEWDNYDLREDALDDSVSSSSVHASPLASSPVRKNLFRFGESTTGFNFSFKSALSPSKSPAKLNQSGASVGTDEESDVTQEEERDGQYFEPVVPLPDLVEVSSGEENEQVVFSHRAKLYRYDKDVGQWKERGIGDIKILQNYDNKQVRIVMRRDQVLKLCANHRITPDMTLQTMKGTERVWVWTACDFADGERKIEHLAVRFKLQDVADSFKKIFDEAKTAQEKDSLITPHVSHLSTPRESPCGKIAIAVLEETTRERTDLTQGDEVIDTTSEAGETSSTSETTPKAVVSPPKFVFGSESVKSIFSSEKSKPFAFGNSSATGSLFGFSFNAPLKNSNSEMTSRVQSGSEGKVKPDKCELPQNSDIKQSSDGKVKNLSAFSKENSSTSYTFKTPEKAQEKSKPEDLPSDNDILIVYELTPTPEQKALAEKLLLPSTFFCYKNRPGYVSEEEEDDEDYEMAVKKLNGKLYLDDSEKPLEENLADNDKECVIVWEKKPTVEERAKADTLKLPPTFFCGVCSDTDEDNGNGEDFQSELRKVCEAQKSQNEKVTDRVGIEHIGETEVTNPVGCKSEEPDSDTKHSSSSPVSGTMDKPVDLSTRKETDMEFPSKGENKPVLFGFGSGTGLSFADLASSNSGDFAFGSKDKNFQWANTGAAVFGTQTTSKGGEDEDGSDEDVVHNEDIHFEPIVSLPEVEVKSGEEDEEVLFKERAKLYRWDRDVSQWKERGIGDIKILWHTMKKYYRILMRRDQVFKVCANHVITKAMELKPLNVSNNALVWTASDYADGEAKVEQLAVRFKTKEMTESFKKKFEECQQNIIKLQNGHTSLAAELSKDTNPVVFFDVCADGEPLGRIIMELFSNIVPQTAENFRALCTGEKGFGFKNSIFHRVVPDFICQGGDITKYNGTGGQSIYGDKFDDENFDLKHTGPGLLSMANYGQNTNSSQFFITLKKAEHLDFKHVVFGFVKDGMDTVRKIESFGSPKGSVSRRICITECGQL</sequence>
<keyword id="KW-0007">Acetylation</keyword>
<keyword id="KW-1015">Disulfide bond</keyword>
<keyword id="KW-1017">Isopeptide bond</keyword>
<keyword id="KW-0472">Membrane</keyword>
<keyword id="KW-0479">Metal-binding</keyword>
<keyword id="KW-0488">Methylation</keyword>
<keyword id="KW-0509">mRNA transport</keyword>
<keyword id="KW-0906">Nuclear pore complex</keyword>
<keyword id="KW-0539">Nucleus</keyword>
<keyword id="KW-0597">Phosphoprotein</keyword>
<keyword id="KW-0653">Protein transport</keyword>
<keyword id="KW-1185">Reference proteome</keyword>
<keyword id="KW-0677">Repeat</keyword>
<keyword id="KW-0694">RNA-binding</keyword>
<keyword id="KW-0802">TPR repeat</keyword>
<keyword id="KW-0808">Transferase</keyword>
<keyword id="KW-0811">Translocation</keyword>
<keyword id="KW-0813">Transport</keyword>
<keyword id="KW-0832">Ubl conjugation</keyword>
<keyword id="KW-0833">Ubl conjugation pathway</keyword>
<keyword id="KW-0862">Zinc</keyword>
<keyword id="KW-0863">Zinc-finger</keyword>
<dbReference type="EC" id="2.3.2.-" evidence="2"/>
<dbReference type="EMBL" id="AF279458">
    <property type="protein sequence ID" value="AAG17403.1"/>
    <property type="molecule type" value="Genomic_DNA"/>
</dbReference>
<dbReference type="EMBL" id="AC158593">
    <property type="status" value="NOT_ANNOTATED_CDS"/>
    <property type="molecule type" value="Genomic_DNA"/>
</dbReference>
<dbReference type="EMBL" id="AK041932">
    <property type="protein sequence ID" value="BAC31101.1"/>
    <property type="molecule type" value="mRNA"/>
</dbReference>
<dbReference type="EMBL" id="X87337">
    <property type="protein sequence ID" value="CAA60778.1"/>
    <property type="molecule type" value="mRNA"/>
</dbReference>
<dbReference type="CCDS" id="CCDS23861.1"/>
<dbReference type="PIR" id="S57968">
    <property type="entry name" value="S57968"/>
</dbReference>
<dbReference type="RefSeq" id="NP_035370.2">
    <property type="nucleotide sequence ID" value="NM_011240.3"/>
</dbReference>
<dbReference type="SMR" id="Q9ERU9"/>
<dbReference type="BioGRID" id="202582">
    <property type="interactions" value="107"/>
</dbReference>
<dbReference type="ComplexPortal" id="CPX-4474">
    <property type="entry name" value="Nuclear pore complex"/>
</dbReference>
<dbReference type="ComplexPortal" id="CPX-4921">
    <property type="entry name" value="E3 ligase (RANBP2) complex"/>
</dbReference>
<dbReference type="FunCoup" id="Q9ERU9">
    <property type="interactions" value="5024"/>
</dbReference>
<dbReference type="IntAct" id="Q9ERU9">
    <property type="interactions" value="92"/>
</dbReference>
<dbReference type="MINT" id="Q9ERU9"/>
<dbReference type="STRING" id="10090.ENSMUSP00000003310"/>
<dbReference type="GlyGen" id="Q9ERU9">
    <property type="glycosylation" value="18 sites, 4 N-linked glycans (4 sites), 1 O-linked glycan (13 sites)"/>
</dbReference>
<dbReference type="iPTMnet" id="Q9ERU9"/>
<dbReference type="PhosphoSitePlus" id="Q9ERU9"/>
<dbReference type="SwissPalm" id="Q9ERU9"/>
<dbReference type="jPOST" id="Q9ERU9"/>
<dbReference type="PaxDb" id="10090-ENSMUSP00000003310"/>
<dbReference type="PeptideAtlas" id="Q9ERU9"/>
<dbReference type="ProteomicsDB" id="255049"/>
<dbReference type="Pumba" id="Q9ERU9"/>
<dbReference type="Antibodypedia" id="33105">
    <property type="antibodies" value="205 antibodies from 25 providers"/>
</dbReference>
<dbReference type="DNASU" id="19386"/>
<dbReference type="Ensembl" id="ENSMUST00000003310.7">
    <property type="protein sequence ID" value="ENSMUSP00000003310.6"/>
    <property type="gene ID" value="ENSMUSG00000003226.8"/>
</dbReference>
<dbReference type="GeneID" id="19386"/>
<dbReference type="KEGG" id="mmu:19386"/>
<dbReference type="UCSC" id="uc007fdd.1">
    <property type="organism name" value="mouse"/>
</dbReference>
<dbReference type="AGR" id="MGI:894323"/>
<dbReference type="CTD" id="5903"/>
<dbReference type="MGI" id="MGI:894323">
    <property type="gene designation" value="Ranbp2"/>
</dbReference>
<dbReference type="VEuPathDB" id="HostDB:ENSMUSG00000003226"/>
<dbReference type="eggNOG" id="KOG0864">
    <property type="taxonomic scope" value="Eukaryota"/>
</dbReference>
<dbReference type="eggNOG" id="KOG0865">
    <property type="taxonomic scope" value="Eukaryota"/>
</dbReference>
<dbReference type="GeneTree" id="ENSGT00940000154389"/>
<dbReference type="HOGENOM" id="CLU_000378_0_0_1"/>
<dbReference type="InParanoid" id="Q9ERU9"/>
<dbReference type="OMA" id="RCIGNHG"/>
<dbReference type="OrthoDB" id="43740at9989"/>
<dbReference type="PhylomeDB" id="Q9ERU9"/>
<dbReference type="TreeFam" id="TF314797"/>
<dbReference type="Reactome" id="R-MMU-141444">
    <property type="pathway name" value="Amplification of signal from unattached kinetochores via a MAD2 inhibitory signal"/>
</dbReference>
<dbReference type="Reactome" id="R-MMU-159227">
    <property type="pathway name" value="Transport of the SLBP independent Mature mRNA"/>
</dbReference>
<dbReference type="Reactome" id="R-MMU-159230">
    <property type="pathway name" value="Transport of the SLBP Dependant Mature mRNA"/>
</dbReference>
<dbReference type="Reactome" id="R-MMU-159231">
    <property type="pathway name" value="Transport of Mature mRNA Derived from an Intronless Transcript"/>
</dbReference>
<dbReference type="Reactome" id="R-MMU-159236">
    <property type="pathway name" value="Transport of Mature mRNA derived from an Intron-Containing Transcript"/>
</dbReference>
<dbReference type="Reactome" id="R-MMU-170822">
    <property type="pathway name" value="Regulation of Glucokinase by Glucokinase Regulatory Protein"/>
</dbReference>
<dbReference type="Reactome" id="R-MMU-191859">
    <property type="pathway name" value="snRNP Assembly"/>
</dbReference>
<dbReference type="Reactome" id="R-MMU-2467813">
    <property type="pathway name" value="Separation of Sister Chromatids"/>
</dbReference>
<dbReference type="Reactome" id="R-MMU-2500257">
    <property type="pathway name" value="Resolution of Sister Chromatid Cohesion"/>
</dbReference>
<dbReference type="Reactome" id="R-MMU-3108214">
    <property type="pathway name" value="SUMOylation of DNA damage response and repair proteins"/>
</dbReference>
<dbReference type="Reactome" id="R-MMU-3232142">
    <property type="pathway name" value="SUMOylation of ubiquitinylation proteins"/>
</dbReference>
<dbReference type="Reactome" id="R-MMU-3301854">
    <property type="pathway name" value="Nuclear Pore Complex (NPC) Disassembly"/>
</dbReference>
<dbReference type="Reactome" id="R-MMU-3371453">
    <property type="pathway name" value="Regulation of HSF1-mediated heat shock response"/>
</dbReference>
<dbReference type="Reactome" id="R-MMU-4085377">
    <property type="pathway name" value="SUMOylation of SUMOylation proteins"/>
</dbReference>
<dbReference type="Reactome" id="R-MMU-4551638">
    <property type="pathway name" value="SUMOylation of chromatin organization proteins"/>
</dbReference>
<dbReference type="Reactome" id="R-MMU-4570464">
    <property type="pathway name" value="SUMOylation of RNA binding proteins"/>
</dbReference>
<dbReference type="Reactome" id="R-MMU-4615885">
    <property type="pathway name" value="SUMOylation of DNA replication proteins"/>
</dbReference>
<dbReference type="Reactome" id="R-MMU-5578749">
    <property type="pathway name" value="Transcriptional regulation by small RNAs"/>
</dbReference>
<dbReference type="Reactome" id="R-MMU-5663220">
    <property type="pathway name" value="RHO GTPases Activate Formins"/>
</dbReference>
<dbReference type="Reactome" id="R-MMU-68877">
    <property type="pathway name" value="Mitotic Prometaphase"/>
</dbReference>
<dbReference type="Reactome" id="R-MMU-9648025">
    <property type="pathway name" value="EML4 and NUDC in mitotic spindle formation"/>
</dbReference>
<dbReference type="UniPathway" id="UPA00886"/>
<dbReference type="BioGRID-ORCS" id="19386">
    <property type="hits" value="20 hits in 77 CRISPR screens"/>
</dbReference>
<dbReference type="ChiTaRS" id="Ranbp2">
    <property type="organism name" value="mouse"/>
</dbReference>
<dbReference type="PRO" id="PR:Q9ERU9"/>
<dbReference type="Proteomes" id="UP000000589">
    <property type="component" value="Chromosome 10"/>
</dbReference>
<dbReference type="RNAct" id="Q9ERU9">
    <property type="molecule type" value="protein"/>
</dbReference>
<dbReference type="Bgee" id="ENSMUSG00000003226">
    <property type="expression patterns" value="Expressed in humerus cartilage element and 264 other cell types or tissues"/>
</dbReference>
<dbReference type="GO" id="GO:0005642">
    <property type="term" value="C:annulate lamellae"/>
    <property type="evidence" value="ECO:0000250"/>
    <property type="project" value="UniProtKB"/>
</dbReference>
<dbReference type="GO" id="GO:1990723">
    <property type="term" value="C:cytoplasmic periphery of the nuclear pore complex"/>
    <property type="evidence" value="ECO:0007669"/>
    <property type="project" value="Ensembl"/>
</dbReference>
<dbReference type="GO" id="GO:0005829">
    <property type="term" value="C:cytosol"/>
    <property type="evidence" value="ECO:0007669"/>
    <property type="project" value="Ensembl"/>
</dbReference>
<dbReference type="GO" id="GO:0005635">
    <property type="term" value="C:nuclear envelope"/>
    <property type="evidence" value="ECO:0000250"/>
    <property type="project" value="UniProtKB"/>
</dbReference>
<dbReference type="GO" id="GO:0042405">
    <property type="term" value="C:nuclear inclusion body"/>
    <property type="evidence" value="ECO:0000250"/>
    <property type="project" value="UniProtKB"/>
</dbReference>
<dbReference type="GO" id="GO:0031965">
    <property type="term" value="C:nuclear membrane"/>
    <property type="evidence" value="ECO:0000250"/>
    <property type="project" value="UniProtKB"/>
</dbReference>
<dbReference type="GO" id="GO:0005643">
    <property type="term" value="C:nuclear pore"/>
    <property type="evidence" value="ECO:0000250"/>
    <property type="project" value="UniProtKB"/>
</dbReference>
<dbReference type="GO" id="GO:0044614">
    <property type="term" value="C:nuclear pore cytoplasmic filaments"/>
    <property type="evidence" value="ECO:0007669"/>
    <property type="project" value="Ensembl"/>
</dbReference>
<dbReference type="GO" id="GO:0044615">
    <property type="term" value="C:nuclear pore nuclear basket"/>
    <property type="evidence" value="ECO:0000250"/>
    <property type="project" value="UniProtKB"/>
</dbReference>
<dbReference type="GO" id="GO:0005654">
    <property type="term" value="C:nucleoplasm"/>
    <property type="evidence" value="ECO:0007669"/>
    <property type="project" value="Ensembl"/>
</dbReference>
<dbReference type="GO" id="GO:0106068">
    <property type="term" value="C:SUMO ligase complex"/>
    <property type="evidence" value="ECO:0000266"/>
    <property type="project" value="ComplexPortal"/>
</dbReference>
<dbReference type="GO" id="GO:0019209">
    <property type="term" value="F:kinase activator activity"/>
    <property type="evidence" value="ECO:0000314"/>
    <property type="project" value="MGI"/>
</dbReference>
<dbReference type="GO" id="GO:0003755">
    <property type="term" value="F:peptidyl-prolyl cis-trans isomerase activity"/>
    <property type="evidence" value="ECO:0007669"/>
    <property type="project" value="InterPro"/>
</dbReference>
<dbReference type="GO" id="GO:0044877">
    <property type="term" value="F:protein-containing complex binding"/>
    <property type="evidence" value="ECO:0007669"/>
    <property type="project" value="Ensembl"/>
</dbReference>
<dbReference type="GO" id="GO:0003723">
    <property type="term" value="F:RNA binding"/>
    <property type="evidence" value="ECO:0007669"/>
    <property type="project" value="UniProtKB-KW"/>
</dbReference>
<dbReference type="GO" id="GO:0031267">
    <property type="term" value="F:small GTPase binding"/>
    <property type="evidence" value="ECO:0007669"/>
    <property type="project" value="Ensembl"/>
</dbReference>
<dbReference type="GO" id="GO:0061665">
    <property type="term" value="F:SUMO ligase activity"/>
    <property type="evidence" value="ECO:0007669"/>
    <property type="project" value="Ensembl"/>
</dbReference>
<dbReference type="GO" id="GO:0019789">
    <property type="term" value="F:SUMO transferase activity"/>
    <property type="evidence" value="ECO:0000269"/>
    <property type="project" value="Reactome"/>
</dbReference>
<dbReference type="GO" id="GO:0008270">
    <property type="term" value="F:zinc ion binding"/>
    <property type="evidence" value="ECO:0007669"/>
    <property type="project" value="UniProtKB-KW"/>
</dbReference>
<dbReference type="GO" id="GO:0051642">
    <property type="term" value="P:centrosome localization"/>
    <property type="evidence" value="ECO:0007669"/>
    <property type="project" value="Ensembl"/>
</dbReference>
<dbReference type="GO" id="GO:0051028">
    <property type="term" value="P:mRNA transport"/>
    <property type="evidence" value="ECO:0007669"/>
    <property type="project" value="UniProtKB-KW"/>
</dbReference>
<dbReference type="GO" id="GO:0006607">
    <property type="term" value="P:NLS-bearing protein import into nucleus"/>
    <property type="evidence" value="ECO:0007669"/>
    <property type="project" value="Ensembl"/>
</dbReference>
<dbReference type="GO" id="GO:0051168">
    <property type="term" value="P:nuclear export"/>
    <property type="evidence" value="ECO:0000269"/>
    <property type="project" value="ComplexPortal"/>
</dbReference>
<dbReference type="GO" id="GO:0006913">
    <property type="term" value="P:nucleocytoplasmic transport"/>
    <property type="evidence" value="ECO:0000303"/>
    <property type="project" value="ComplexPortal"/>
</dbReference>
<dbReference type="GO" id="GO:0006457">
    <property type="term" value="P:protein folding"/>
    <property type="evidence" value="ECO:0007669"/>
    <property type="project" value="InterPro"/>
</dbReference>
<dbReference type="GO" id="GO:0016925">
    <property type="term" value="P:protein sumoylation"/>
    <property type="evidence" value="ECO:0000250"/>
    <property type="project" value="UniProtKB"/>
</dbReference>
<dbReference type="GO" id="GO:0006111">
    <property type="term" value="P:regulation of gluconeogenesis"/>
    <property type="evidence" value="ECO:0000315"/>
    <property type="project" value="MGI"/>
</dbReference>
<dbReference type="GO" id="GO:0001975">
    <property type="term" value="P:response to amphetamine"/>
    <property type="evidence" value="ECO:0007669"/>
    <property type="project" value="Ensembl"/>
</dbReference>
<dbReference type="CDD" id="cd01926">
    <property type="entry name" value="cyclophilin_ABH_like"/>
    <property type="match status" value="1"/>
</dbReference>
<dbReference type="CDD" id="cd14684">
    <property type="entry name" value="RanBD1_RanBP2-like"/>
    <property type="match status" value="1"/>
</dbReference>
<dbReference type="CDD" id="cd13177">
    <property type="entry name" value="RanBD2_RanBP2-like"/>
    <property type="match status" value="1"/>
</dbReference>
<dbReference type="CDD" id="cd14685">
    <property type="entry name" value="RanBD3_RanBP2-like"/>
    <property type="match status" value="1"/>
</dbReference>
<dbReference type="CDD" id="cd13178">
    <property type="entry name" value="RanBD4_RanBP2-like"/>
    <property type="match status" value="1"/>
</dbReference>
<dbReference type="FunFam" id="2.30.29.30:FF:000018">
    <property type="entry name" value="E3 SUMO-protein ligase RanBP2"/>
    <property type="match status" value="4"/>
</dbReference>
<dbReference type="FunFam" id="2.40.100.10:FF:000020">
    <property type="entry name" value="E3 SUMO-protein ligase RanBP2"/>
    <property type="match status" value="1"/>
</dbReference>
<dbReference type="FunFam" id="4.10.1060.10:FF:000003">
    <property type="entry name" value="E3 SUMO-protein ligase RanBP2"/>
    <property type="match status" value="4"/>
</dbReference>
<dbReference type="FunFam" id="1.25.40.10:FF:000114">
    <property type="entry name" value="E3 SUMO-protein ligase RanBP2 isoform X1"/>
    <property type="match status" value="1"/>
</dbReference>
<dbReference type="Gene3D" id="2.40.100.10">
    <property type="entry name" value="Cyclophilin-like"/>
    <property type="match status" value="1"/>
</dbReference>
<dbReference type="Gene3D" id="2.30.29.30">
    <property type="entry name" value="Pleckstrin-homology domain (PH domain)/Phosphotyrosine-binding domain (PTB)"/>
    <property type="match status" value="4"/>
</dbReference>
<dbReference type="Gene3D" id="1.25.40.10">
    <property type="entry name" value="Tetratricopeptide repeat domain"/>
    <property type="match status" value="1"/>
</dbReference>
<dbReference type="Gene3D" id="4.10.1060.10">
    <property type="entry name" value="Zinc finger, RanBP2-type"/>
    <property type="match status" value="6"/>
</dbReference>
<dbReference type="InterPro" id="IPR029000">
    <property type="entry name" value="Cyclophilin-like_dom_sf"/>
</dbReference>
<dbReference type="InterPro" id="IPR020892">
    <property type="entry name" value="Cyclophilin-type_PPIase_CS"/>
</dbReference>
<dbReference type="InterPro" id="IPR002130">
    <property type="entry name" value="Cyclophilin-type_PPIase_dom"/>
</dbReference>
<dbReference type="InterPro" id="IPR022011">
    <property type="entry name" value="IR1-M"/>
</dbReference>
<dbReference type="InterPro" id="IPR011993">
    <property type="entry name" value="PH-like_dom_sf"/>
</dbReference>
<dbReference type="InterPro" id="IPR000156">
    <property type="entry name" value="Ran_bind_dom"/>
</dbReference>
<dbReference type="InterPro" id="IPR045255">
    <property type="entry name" value="RanBP1-like"/>
</dbReference>
<dbReference type="InterPro" id="IPR011990">
    <property type="entry name" value="TPR-like_helical_dom_sf"/>
</dbReference>
<dbReference type="InterPro" id="IPR019734">
    <property type="entry name" value="TPR_rpt"/>
</dbReference>
<dbReference type="InterPro" id="IPR001876">
    <property type="entry name" value="Znf_RanBP2"/>
</dbReference>
<dbReference type="InterPro" id="IPR036443">
    <property type="entry name" value="Znf_RanBP2_sf"/>
</dbReference>
<dbReference type="PANTHER" id="PTHR23138:SF87">
    <property type="entry name" value="E3 SUMO-PROTEIN LIGASE RANBP2"/>
    <property type="match status" value="1"/>
</dbReference>
<dbReference type="PANTHER" id="PTHR23138">
    <property type="entry name" value="RAN BINDING PROTEIN"/>
    <property type="match status" value="1"/>
</dbReference>
<dbReference type="Pfam" id="PF12185">
    <property type="entry name" value="IR1-M"/>
    <property type="match status" value="2"/>
</dbReference>
<dbReference type="Pfam" id="PF00160">
    <property type="entry name" value="Pro_isomerase"/>
    <property type="match status" value="1"/>
</dbReference>
<dbReference type="Pfam" id="PF00638">
    <property type="entry name" value="Ran_BP1"/>
    <property type="match status" value="4"/>
</dbReference>
<dbReference type="Pfam" id="PF00641">
    <property type="entry name" value="Zn_ribbon_RanBP"/>
    <property type="match status" value="6"/>
</dbReference>
<dbReference type="PRINTS" id="PR00153">
    <property type="entry name" value="CSAPPISMRASE"/>
</dbReference>
<dbReference type="SMART" id="SM00160">
    <property type="entry name" value="RanBD"/>
    <property type="match status" value="4"/>
</dbReference>
<dbReference type="SMART" id="SM00028">
    <property type="entry name" value="TPR"/>
    <property type="match status" value="1"/>
</dbReference>
<dbReference type="SMART" id="SM00547">
    <property type="entry name" value="ZnF_RBZ"/>
    <property type="match status" value="6"/>
</dbReference>
<dbReference type="SUPFAM" id="SSF50891">
    <property type="entry name" value="Cyclophilin-like"/>
    <property type="match status" value="1"/>
</dbReference>
<dbReference type="SUPFAM" id="SSF50729">
    <property type="entry name" value="PH domain-like"/>
    <property type="match status" value="4"/>
</dbReference>
<dbReference type="SUPFAM" id="SSF90209">
    <property type="entry name" value="Ran binding protein zinc finger-like"/>
    <property type="match status" value="4"/>
</dbReference>
<dbReference type="SUPFAM" id="SSF48452">
    <property type="entry name" value="TPR-like"/>
    <property type="match status" value="1"/>
</dbReference>
<dbReference type="PROSITE" id="PS00170">
    <property type="entry name" value="CSA_PPIASE_1"/>
    <property type="match status" value="1"/>
</dbReference>
<dbReference type="PROSITE" id="PS50072">
    <property type="entry name" value="CSA_PPIASE_2"/>
    <property type="match status" value="1"/>
</dbReference>
<dbReference type="PROSITE" id="PS50196">
    <property type="entry name" value="RANBD1"/>
    <property type="match status" value="4"/>
</dbReference>
<dbReference type="PROSITE" id="PS50005">
    <property type="entry name" value="TPR"/>
    <property type="match status" value="2"/>
</dbReference>
<dbReference type="PROSITE" id="PS50293">
    <property type="entry name" value="TPR_REGION"/>
    <property type="match status" value="1"/>
</dbReference>
<dbReference type="PROSITE" id="PS01358">
    <property type="entry name" value="ZF_RANBP2_1"/>
    <property type="match status" value="6"/>
</dbReference>
<dbReference type="PROSITE" id="PS50199">
    <property type="entry name" value="ZF_RANBP2_2"/>
    <property type="match status" value="6"/>
</dbReference>